<protein>
    <recommendedName>
        <fullName>Uncharacterized mitochondrial protein ORF154</fullName>
    </recommendedName>
</protein>
<accession>Q04655</accession>
<feature type="chain" id="PRO_0000196901" description="Uncharacterized mitochondrial protein ORF154">
    <location>
        <begin position="1"/>
        <end position="154"/>
    </location>
</feature>
<geneLocation type="mitochondrion"/>
<sequence length="154" mass="17934">MMYSIKTRKIRRNKIRLHKGSVREHQERGSDQVRDWIKNSVLKDYGLSSTVRSIKSFSKVSSRCVYGILLERVVYIAPDKFFPFSFVHLSPLHFWINQPAISFSTSLFSLLKVKQNFNLTRHELVLTVRLILIQRQLILILILRVGGGSYTQPS</sequence>
<evidence type="ECO:0000305" key="1"/>
<proteinExistence type="predicted"/>
<dbReference type="EMBL" id="X54285">
    <property type="protein sequence ID" value="CAA38182.1"/>
    <property type="molecule type" value="Genomic_DNA"/>
</dbReference>
<dbReference type="PIR" id="B61027">
    <property type="entry name" value="B61027"/>
</dbReference>
<dbReference type="GO" id="GO:0005739">
    <property type="term" value="C:mitochondrion"/>
    <property type="evidence" value="ECO:0007669"/>
    <property type="project" value="UniProtKB-SubCell"/>
</dbReference>
<name>YMA6_VICFA</name>
<comment type="subcellular location">
    <subcellularLocation>
        <location evidence="1">Mitochondrion</location>
    </subcellularLocation>
</comment>
<organism>
    <name type="scientific">Vicia faba</name>
    <name type="common">Broad bean</name>
    <name type="synonym">Faba vulgaris</name>
    <dbReference type="NCBI Taxonomy" id="3906"/>
    <lineage>
        <taxon>Eukaryota</taxon>
        <taxon>Viridiplantae</taxon>
        <taxon>Streptophyta</taxon>
        <taxon>Embryophyta</taxon>
        <taxon>Tracheophyta</taxon>
        <taxon>Spermatophyta</taxon>
        <taxon>Magnoliopsida</taxon>
        <taxon>eudicotyledons</taxon>
        <taxon>Gunneridae</taxon>
        <taxon>Pentapetalae</taxon>
        <taxon>rosids</taxon>
        <taxon>fabids</taxon>
        <taxon>Fabales</taxon>
        <taxon>Fabaceae</taxon>
        <taxon>Papilionoideae</taxon>
        <taxon>50 kb inversion clade</taxon>
        <taxon>NPAAA clade</taxon>
        <taxon>Hologalegina</taxon>
        <taxon>IRL clade</taxon>
        <taxon>Fabeae</taxon>
        <taxon>Vicia</taxon>
    </lineage>
</organism>
<keyword id="KW-0496">Mitochondrion</keyword>
<reference key="1">
    <citation type="journal article" date="1990" name="Curr. Genet.">
        <title>A broad bean mitochondrial atp6 gene with an unusually simple, non-conserved 5' region.</title>
        <authorList>
            <person name="Macfarlane J.L."/>
            <person name="Wahleithner J.A."/>
            <person name="Wolstenholme D.R."/>
        </authorList>
    </citation>
    <scope>NUCLEOTIDE SEQUENCE [GENOMIC DNA]</scope>
</reference>